<dbReference type="EC" id="1.14.99.48" evidence="1"/>
<dbReference type="EMBL" id="BA000017">
    <property type="protein sequence ID" value="BAB56327.1"/>
    <property type="molecule type" value="Genomic_DNA"/>
</dbReference>
<dbReference type="RefSeq" id="WP_000480603.1">
    <property type="nucleotide sequence ID" value="NC_002758.2"/>
</dbReference>
<dbReference type="PDB" id="1SQE">
    <property type="method" value="X-ray"/>
    <property type="resolution" value="1.50 A"/>
    <property type="chains" value="A/B=1-108"/>
</dbReference>
<dbReference type="PDBsum" id="1SQE"/>
<dbReference type="SMR" id="Q99X56"/>
<dbReference type="KEGG" id="sav:SAV0165"/>
<dbReference type="HOGENOM" id="CLU_141544_2_1_9"/>
<dbReference type="PhylomeDB" id="Q99X56"/>
<dbReference type="BRENDA" id="1.14.99.48">
    <property type="organism ID" value="3352"/>
</dbReference>
<dbReference type="EvolutionaryTrace" id="Q99X56"/>
<dbReference type="Proteomes" id="UP000002481">
    <property type="component" value="Chromosome"/>
</dbReference>
<dbReference type="GO" id="GO:0005737">
    <property type="term" value="C:cytoplasm"/>
    <property type="evidence" value="ECO:0007669"/>
    <property type="project" value="UniProtKB-SubCell"/>
</dbReference>
<dbReference type="GO" id="GO:0020037">
    <property type="term" value="F:heme binding"/>
    <property type="evidence" value="ECO:0007669"/>
    <property type="project" value="UniProtKB-UniRule"/>
</dbReference>
<dbReference type="GO" id="GO:0004392">
    <property type="term" value="F:heme oxygenase (decyclizing) activity"/>
    <property type="evidence" value="ECO:0007669"/>
    <property type="project" value="UniProtKB-UniRule"/>
</dbReference>
<dbReference type="GO" id="GO:0005506">
    <property type="term" value="F:iron ion binding"/>
    <property type="evidence" value="ECO:0007669"/>
    <property type="project" value="UniProtKB-UniRule"/>
</dbReference>
<dbReference type="GO" id="GO:0042167">
    <property type="term" value="P:heme catabolic process"/>
    <property type="evidence" value="ECO:0007669"/>
    <property type="project" value="UniProtKB-UniRule"/>
</dbReference>
<dbReference type="GO" id="GO:0033212">
    <property type="term" value="P:iron import into cell"/>
    <property type="evidence" value="ECO:0007669"/>
    <property type="project" value="InterPro"/>
</dbReference>
<dbReference type="Gene3D" id="3.30.70.100">
    <property type="match status" value="1"/>
</dbReference>
<dbReference type="HAMAP" id="MF_01272">
    <property type="entry name" value="Heme_degrading_monooxygenase"/>
    <property type="match status" value="1"/>
</dbReference>
<dbReference type="InterPro" id="IPR007138">
    <property type="entry name" value="ABM_dom"/>
</dbReference>
<dbReference type="InterPro" id="IPR011008">
    <property type="entry name" value="Dimeric_a/b-barrel"/>
</dbReference>
<dbReference type="InterPro" id="IPR050404">
    <property type="entry name" value="Heme-degrading_MO"/>
</dbReference>
<dbReference type="InterPro" id="IPR023953">
    <property type="entry name" value="IsdG"/>
</dbReference>
<dbReference type="NCBIfam" id="NF009838">
    <property type="entry name" value="PRK13313.1"/>
    <property type="match status" value="1"/>
</dbReference>
<dbReference type="PANTHER" id="PTHR34474:SF4">
    <property type="entry name" value="HEME OXYGENASE (STAPHYLOBILIN-PRODUCING) 1"/>
    <property type="match status" value="1"/>
</dbReference>
<dbReference type="PANTHER" id="PTHR34474">
    <property type="entry name" value="SIGNAL TRANSDUCTION PROTEIN TRAP"/>
    <property type="match status" value="1"/>
</dbReference>
<dbReference type="Pfam" id="PF03992">
    <property type="entry name" value="ABM"/>
    <property type="match status" value="1"/>
</dbReference>
<dbReference type="SUPFAM" id="SSF54909">
    <property type="entry name" value="Dimeric alpha+beta barrel"/>
    <property type="match status" value="1"/>
</dbReference>
<dbReference type="PROSITE" id="PS51725">
    <property type="entry name" value="ABM"/>
    <property type="match status" value="1"/>
</dbReference>
<keyword id="KW-0002">3D-structure</keyword>
<keyword id="KW-0963">Cytoplasm</keyword>
<keyword id="KW-0349">Heme</keyword>
<keyword id="KW-0408">Iron</keyword>
<keyword id="KW-0479">Metal-binding</keyword>
<keyword id="KW-0503">Monooxygenase</keyword>
<keyword id="KW-0560">Oxidoreductase</keyword>
<evidence type="ECO:0000255" key="1">
    <source>
        <dbReference type="HAMAP-Rule" id="MF_01272"/>
    </source>
</evidence>
<evidence type="ECO:0000269" key="2">
    <source>
    </source>
</evidence>
<evidence type="ECO:0007829" key="3">
    <source>
        <dbReference type="PDB" id="1SQE"/>
    </source>
</evidence>
<name>HDOX2_STAAM</name>
<proteinExistence type="evidence at protein level"/>
<protein>
    <recommendedName>
        <fullName evidence="1">Heme oxygenase (staphylobilin-producing) 2</fullName>
        <ecNumber evidence="1">1.14.99.48</ecNumber>
    </recommendedName>
    <alternativeName>
        <fullName evidence="1">Heme-degrading monooxygenase 2</fullName>
    </alternativeName>
    <alternativeName>
        <fullName evidence="1">Iron-regulated surface determinant 2</fullName>
    </alternativeName>
    <alternativeName>
        <fullName evidence="1">Iron-responsive surface determinant 2</fullName>
    </alternativeName>
</protein>
<gene>
    <name type="primary">isdI</name>
    <name type="ordered locus">SAV0165</name>
</gene>
<feature type="chain" id="PRO_0000270088" description="Heme oxygenase (staphylobilin-producing) 2">
    <location>
        <begin position="1"/>
        <end position="108"/>
    </location>
</feature>
<feature type="domain" description="ABM" evidence="1">
    <location>
        <begin position="2"/>
        <end position="93"/>
    </location>
</feature>
<feature type="binding site" evidence="1">
    <location>
        <position position="6"/>
    </location>
    <ligand>
        <name>Fe cation</name>
        <dbReference type="ChEBI" id="CHEBI:24875"/>
    </ligand>
</feature>
<feature type="binding site" evidence="1">
    <location>
        <begin position="21"/>
        <end position="28"/>
    </location>
    <ligand>
        <name>heme</name>
        <dbReference type="ChEBI" id="CHEBI:30413"/>
    </ligand>
</feature>
<feature type="binding site" description="axial binding residue" evidence="1">
    <location>
        <position position="76"/>
    </location>
    <ligand>
        <name>heme</name>
        <dbReference type="ChEBI" id="CHEBI:30413"/>
    </ligand>
    <ligandPart>
        <name>Fe</name>
        <dbReference type="ChEBI" id="CHEBI:18248"/>
    </ligandPart>
</feature>
<feature type="site" description="Transition state stabilizer" evidence="1">
    <location>
        <position position="66"/>
    </location>
</feature>
<feature type="strand" evidence="3">
    <location>
        <begin position="2"/>
        <end position="10"/>
    </location>
</feature>
<feature type="helix" evidence="3">
    <location>
        <begin position="15"/>
        <end position="18"/>
    </location>
</feature>
<feature type="helix" evidence="3">
    <location>
        <begin position="19"/>
        <end position="23"/>
    </location>
</feature>
<feature type="helix" evidence="3">
    <location>
        <begin position="28"/>
        <end position="30"/>
    </location>
</feature>
<feature type="strand" evidence="3">
    <location>
        <begin position="34"/>
        <end position="42"/>
    </location>
</feature>
<feature type="strand" evidence="3">
    <location>
        <begin position="46"/>
        <end position="58"/>
    </location>
</feature>
<feature type="helix" evidence="3">
    <location>
        <begin position="60"/>
        <end position="67"/>
    </location>
</feature>
<feature type="helix" evidence="3">
    <location>
        <begin position="70"/>
        <end position="74"/>
    </location>
</feature>
<feature type="strand" evidence="3">
    <location>
        <begin position="91"/>
        <end position="107"/>
    </location>
</feature>
<sequence length="108" mass="12791">MFMAENRLQLQKGSAEETIERFYNRQGIETIEGFQQMFVTKTLNTEDTDEVKILTIWESEDSFNNWLNSDVFKEAHKNVRLKSDDDGQQSPILSNKVFKYDIGYHYQK</sequence>
<organism>
    <name type="scientific">Staphylococcus aureus (strain Mu50 / ATCC 700699)</name>
    <dbReference type="NCBI Taxonomy" id="158878"/>
    <lineage>
        <taxon>Bacteria</taxon>
        <taxon>Bacillati</taxon>
        <taxon>Bacillota</taxon>
        <taxon>Bacilli</taxon>
        <taxon>Bacillales</taxon>
        <taxon>Staphylococcaceae</taxon>
        <taxon>Staphylococcus</taxon>
    </lineage>
</organism>
<accession>Q99X56</accession>
<comment type="function">
    <text evidence="1 2">Allows bacterial pathogens to use the host heme as an iron source. Catalyzes the oxidative degradation of the heme macrocyclic porphyrin ring to the oxo-bilirubin chromophore staphylobilin (a mixture of the linear tetrapyrroles 5-oxo-delta-bilirubin and 15-oxo-beta-bilirubin) in the presence of a suitable electron donor such as ascorbate or NADPH--cytochrome P450 reductase, with subsequent release of free iron.</text>
</comment>
<comment type="catalytic activity">
    <reaction evidence="1">
        <text>heme b + 5 AH2 + 4 O2 + 2 H(+) = delta-staphylobilin + Fe(2+) + formaldehyde + 5 A + 4 H2O</text>
        <dbReference type="Rhea" id="RHEA:37039"/>
        <dbReference type="ChEBI" id="CHEBI:13193"/>
        <dbReference type="ChEBI" id="CHEBI:15377"/>
        <dbReference type="ChEBI" id="CHEBI:15378"/>
        <dbReference type="ChEBI" id="CHEBI:15379"/>
        <dbReference type="ChEBI" id="CHEBI:16842"/>
        <dbReference type="ChEBI" id="CHEBI:17499"/>
        <dbReference type="ChEBI" id="CHEBI:29033"/>
        <dbReference type="ChEBI" id="CHEBI:60344"/>
        <dbReference type="ChEBI" id="CHEBI:74361"/>
        <dbReference type="EC" id="1.14.99.48"/>
    </reaction>
</comment>
<comment type="catalytic activity">
    <reaction evidence="1">
        <text>heme b + 5 AH2 + 4 O2 + 2 H(+) = beta-staphylobilin + Fe(2+) + formaldehyde + 5 A + 4 H2O</text>
        <dbReference type="Rhea" id="RHEA:37363"/>
        <dbReference type="ChEBI" id="CHEBI:13193"/>
        <dbReference type="ChEBI" id="CHEBI:15377"/>
        <dbReference type="ChEBI" id="CHEBI:15378"/>
        <dbReference type="ChEBI" id="CHEBI:15379"/>
        <dbReference type="ChEBI" id="CHEBI:16842"/>
        <dbReference type="ChEBI" id="CHEBI:17499"/>
        <dbReference type="ChEBI" id="CHEBI:29033"/>
        <dbReference type="ChEBI" id="CHEBI:60344"/>
        <dbReference type="ChEBI" id="CHEBI:74362"/>
        <dbReference type="EC" id="1.14.99.48"/>
    </reaction>
</comment>
<comment type="subunit">
    <text evidence="1 2">Homodimer.</text>
</comment>
<comment type="subcellular location">
    <subcellularLocation>
        <location evidence="1">Cytoplasm</location>
    </subcellularLocation>
</comment>
<comment type="miscellaneous">
    <text>IsdI seems to carry out oxygenation of the heme without the assistance of any of the prosthetic groups or cofactors normally associated with activation of molecular oxygen.</text>
</comment>
<comment type="similarity">
    <text evidence="1">Belongs to the antibiotic biosynthesis monooxygenase family. Heme-degrading monooxygenase IsdG subfamily.</text>
</comment>
<reference key="1">
    <citation type="journal article" date="2001" name="Lancet">
        <title>Whole genome sequencing of meticillin-resistant Staphylococcus aureus.</title>
        <authorList>
            <person name="Kuroda M."/>
            <person name="Ohta T."/>
            <person name="Uchiyama I."/>
            <person name="Baba T."/>
            <person name="Yuzawa H."/>
            <person name="Kobayashi I."/>
            <person name="Cui L."/>
            <person name="Oguchi A."/>
            <person name="Aoki K."/>
            <person name="Nagai Y."/>
            <person name="Lian J.-Q."/>
            <person name="Ito T."/>
            <person name="Kanamori M."/>
            <person name="Matsumaru H."/>
            <person name="Maruyama A."/>
            <person name="Murakami H."/>
            <person name="Hosoyama A."/>
            <person name="Mizutani-Ui Y."/>
            <person name="Takahashi N.K."/>
            <person name="Sawano T."/>
            <person name="Inoue R."/>
            <person name="Kaito C."/>
            <person name="Sekimizu K."/>
            <person name="Hirakawa H."/>
            <person name="Kuhara S."/>
            <person name="Goto S."/>
            <person name="Yabuzaki J."/>
            <person name="Kanehisa M."/>
            <person name="Yamashita A."/>
            <person name="Oshima K."/>
            <person name="Furuya K."/>
            <person name="Yoshino C."/>
            <person name="Shiba T."/>
            <person name="Hattori M."/>
            <person name="Ogasawara N."/>
            <person name="Hayashi H."/>
            <person name="Hiramatsu K."/>
        </authorList>
    </citation>
    <scope>NUCLEOTIDE SEQUENCE [LARGE SCALE GENOMIC DNA]</scope>
    <source>
        <strain>Mu50 / ATCC 700699</strain>
    </source>
</reference>
<reference key="2">
    <citation type="journal article" date="2005" name="J. Biol. Chem.">
        <title>Staphylococcus aureus IsdG and IsdI, heme-degrading enzymes with structural similarity to monooxygenases.</title>
        <authorList>
            <person name="Wu R."/>
            <person name="Skaar E.P."/>
            <person name="Zhang R."/>
            <person name="Joachimiak G."/>
            <person name="Gornicki P."/>
            <person name="Schneewind O."/>
            <person name="Joachimiak A."/>
        </authorList>
    </citation>
    <scope>X-RAY CRYSTALLOGRAPHY (1.5 ANGSTROMS)</scope>
    <scope>FUNCTION</scope>
    <scope>SUBUNIT</scope>
</reference>